<protein>
    <recommendedName>
        <fullName evidence="1">Histidinol-phosphate aminotransferase</fullName>
        <ecNumber evidence="1">2.6.1.9</ecNumber>
    </recommendedName>
    <alternativeName>
        <fullName evidence="1">Imidazole acetol-phosphate transaminase</fullName>
    </alternativeName>
</protein>
<gene>
    <name evidence="1" type="primary">hisC</name>
    <name type="ordered locus">SAV0724</name>
</gene>
<feature type="chain" id="PRO_0000153454" description="Histidinol-phosphate aminotransferase">
    <location>
        <begin position="1"/>
        <end position="352"/>
    </location>
</feature>
<feature type="modified residue" description="N6-(pyridoxal phosphate)lysine" evidence="1">
    <location>
        <position position="221"/>
    </location>
</feature>
<reference key="1">
    <citation type="journal article" date="2001" name="Lancet">
        <title>Whole genome sequencing of meticillin-resistant Staphylococcus aureus.</title>
        <authorList>
            <person name="Kuroda M."/>
            <person name="Ohta T."/>
            <person name="Uchiyama I."/>
            <person name="Baba T."/>
            <person name="Yuzawa H."/>
            <person name="Kobayashi I."/>
            <person name="Cui L."/>
            <person name="Oguchi A."/>
            <person name="Aoki K."/>
            <person name="Nagai Y."/>
            <person name="Lian J.-Q."/>
            <person name="Ito T."/>
            <person name="Kanamori M."/>
            <person name="Matsumaru H."/>
            <person name="Maruyama A."/>
            <person name="Murakami H."/>
            <person name="Hosoyama A."/>
            <person name="Mizutani-Ui Y."/>
            <person name="Takahashi N.K."/>
            <person name="Sawano T."/>
            <person name="Inoue R."/>
            <person name="Kaito C."/>
            <person name="Sekimizu K."/>
            <person name="Hirakawa H."/>
            <person name="Kuhara S."/>
            <person name="Goto S."/>
            <person name="Yabuzaki J."/>
            <person name="Kanehisa M."/>
            <person name="Yamashita A."/>
            <person name="Oshima K."/>
            <person name="Furuya K."/>
            <person name="Yoshino C."/>
            <person name="Shiba T."/>
            <person name="Hattori M."/>
            <person name="Ogasawara N."/>
            <person name="Hayashi H."/>
            <person name="Hiramatsu K."/>
        </authorList>
    </citation>
    <scope>NUCLEOTIDE SEQUENCE [LARGE SCALE GENOMIC DNA]</scope>
    <source>
        <strain>Mu50 / ATCC 700699</strain>
    </source>
</reference>
<sequence>MKEQLNQLSAYQPGLSPRALKEKYGIEGDLYKLASNENLYGPSPKVKEAISAHLDELYYYPETGSPTLKAAISKHLNVDQSRILFGAGLDEVILMISRAVLTPGDTIVTSEATFGQYYHNAIVESANVIQVPLKDGGFDLEGILKEVNEDTSLVWLCNPNNPTGTYFNHESLDSFLSQVPPHVPVIIDEAYFEFVTAEDYPDTLALQQKYDNAFLLRTFSKAYGLAGLRVGYVVASEHAIEKWNIIRPPFNVTRISEYAAVAALEDQQYLKEVTHKNSVERERFYQLPQSEYFLPSQTNFIFVKTKRVNELYEALLNVGCITRPFPTGVRITIGFKEQNDKMLEVLSNFKYE</sequence>
<name>HIS8_STAAM</name>
<organism>
    <name type="scientific">Staphylococcus aureus (strain Mu50 / ATCC 700699)</name>
    <dbReference type="NCBI Taxonomy" id="158878"/>
    <lineage>
        <taxon>Bacteria</taxon>
        <taxon>Bacillati</taxon>
        <taxon>Bacillota</taxon>
        <taxon>Bacilli</taxon>
        <taxon>Bacillales</taxon>
        <taxon>Staphylococcaceae</taxon>
        <taxon>Staphylococcus</taxon>
    </lineage>
</organism>
<proteinExistence type="inferred from homology"/>
<accession>P67724</accession>
<accession>Q99VP9</accession>
<comment type="catalytic activity">
    <reaction evidence="1">
        <text>L-histidinol phosphate + 2-oxoglutarate = 3-(imidazol-4-yl)-2-oxopropyl phosphate + L-glutamate</text>
        <dbReference type="Rhea" id="RHEA:23744"/>
        <dbReference type="ChEBI" id="CHEBI:16810"/>
        <dbReference type="ChEBI" id="CHEBI:29985"/>
        <dbReference type="ChEBI" id="CHEBI:57766"/>
        <dbReference type="ChEBI" id="CHEBI:57980"/>
        <dbReference type="EC" id="2.6.1.9"/>
    </reaction>
</comment>
<comment type="cofactor">
    <cofactor evidence="1">
        <name>pyridoxal 5'-phosphate</name>
        <dbReference type="ChEBI" id="CHEBI:597326"/>
    </cofactor>
</comment>
<comment type="pathway">
    <text evidence="1">Amino-acid biosynthesis; L-histidine biosynthesis; L-histidine from 5-phospho-alpha-D-ribose 1-diphosphate: step 7/9.</text>
</comment>
<comment type="subunit">
    <text evidence="1">Homodimer.</text>
</comment>
<comment type="similarity">
    <text evidence="1">Belongs to the class-II pyridoxal-phosphate-dependent aminotransferase family. Histidinol-phosphate aminotransferase subfamily.</text>
</comment>
<keyword id="KW-0028">Amino-acid biosynthesis</keyword>
<keyword id="KW-0032">Aminotransferase</keyword>
<keyword id="KW-0368">Histidine biosynthesis</keyword>
<keyword id="KW-0663">Pyridoxal phosphate</keyword>
<keyword id="KW-0808">Transferase</keyword>
<evidence type="ECO:0000255" key="1">
    <source>
        <dbReference type="HAMAP-Rule" id="MF_01023"/>
    </source>
</evidence>
<dbReference type="EC" id="2.6.1.9" evidence="1"/>
<dbReference type="EMBL" id="BA000017">
    <property type="protein sequence ID" value="BAB56886.1"/>
    <property type="molecule type" value="Genomic_DNA"/>
</dbReference>
<dbReference type="RefSeq" id="WP_000663030.1">
    <property type="nucleotide sequence ID" value="NC_002758.2"/>
</dbReference>
<dbReference type="SMR" id="P67724"/>
<dbReference type="KEGG" id="sav:SAV0724"/>
<dbReference type="HOGENOM" id="CLU_017584_3_3_9"/>
<dbReference type="PhylomeDB" id="P67724"/>
<dbReference type="UniPathway" id="UPA00031">
    <property type="reaction ID" value="UER00012"/>
</dbReference>
<dbReference type="Proteomes" id="UP000002481">
    <property type="component" value="Chromosome"/>
</dbReference>
<dbReference type="GO" id="GO:0004400">
    <property type="term" value="F:histidinol-phosphate transaminase activity"/>
    <property type="evidence" value="ECO:0007669"/>
    <property type="project" value="UniProtKB-UniRule"/>
</dbReference>
<dbReference type="GO" id="GO:0030170">
    <property type="term" value="F:pyridoxal phosphate binding"/>
    <property type="evidence" value="ECO:0007669"/>
    <property type="project" value="InterPro"/>
</dbReference>
<dbReference type="GO" id="GO:0000105">
    <property type="term" value="P:L-histidine biosynthetic process"/>
    <property type="evidence" value="ECO:0007669"/>
    <property type="project" value="UniProtKB-UniRule"/>
</dbReference>
<dbReference type="CDD" id="cd00609">
    <property type="entry name" value="AAT_like"/>
    <property type="match status" value="1"/>
</dbReference>
<dbReference type="Gene3D" id="3.90.1150.10">
    <property type="entry name" value="Aspartate Aminotransferase, domain 1"/>
    <property type="match status" value="1"/>
</dbReference>
<dbReference type="Gene3D" id="3.40.640.10">
    <property type="entry name" value="Type I PLP-dependent aspartate aminotransferase-like (Major domain)"/>
    <property type="match status" value="1"/>
</dbReference>
<dbReference type="HAMAP" id="MF_01023">
    <property type="entry name" value="HisC_aminotrans_2"/>
    <property type="match status" value="1"/>
</dbReference>
<dbReference type="InterPro" id="IPR001917">
    <property type="entry name" value="Aminotrans_II_pyridoxalP_BS"/>
</dbReference>
<dbReference type="InterPro" id="IPR004839">
    <property type="entry name" value="Aminotransferase_I/II_large"/>
</dbReference>
<dbReference type="InterPro" id="IPR005861">
    <property type="entry name" value="HisP_aminotrans"/>
</dbReference>
<dbReference type="InterPro" id="IPR050106">
    <property type="entry name" value="HistidinolP_aminotransfase"/>
</dbReference>
<dbReference type="InterPro" id="IPR015424">
    <property type="entry name" value="PyrdxlP-dep_Trfase"/>
</dbReference>
<dbReference type="InterPro" id="IPR015421">
    <property type="entry name" value="PyrdxlP-dep_Trfase_major"/>
</dbReference>
<dbReference type="InterPro" id="IPR015422">
    <property type="entry name" value="PyrdxlP-dep_Trfase_small"/>
</dbReference>
<dbReference type="NCBIfam" id="TIGR01141">
    <property type="entry name" value="hisC"/>
    <property type="match status" value="1"/>
</dbReference>
<dbReference type="PANTHER" id="PTHR43643:SF3">
    <property type="entry name" value="HISTIDINOL-PHOSPHATE AMINOTRANSFERASE"/>
    <property type="match status" value="1"/>
</dbReference>
<dbReference type="PANTHER" id="PTHR43643">
    <property type="entry name" value="HISTIDINOL-PHOSPHATE AMINOTRANSFERASE 2"/>
    <property type="match status" value="1"/>
</dbReference>
<dbReference type="Pfam" id="PF00155">
    <property type="entry name" value="Aminotran_1_2"/>
    <property type="match status" value="1"/>
</dbReference>
<dbReference type="SUPFAM" id="SSF53383">
    <property type="entry name" value="PLP-dependent transferases"/>
    <property type="match status" value="1"/>
</dbReference>
<dbReference type="PROSITE" id="PS00599">
    <property type="entry name" value="AA_TRANSFER_CLASS_2"/>
    <property type="match status" value="1"/>
</dbReference>